<reference key="1">
    <citation type="journal article" date="2008" name="Proc. Natl. Acad. Sci. U.S.A.">
        <title>Niche adaptation and genome expansion in the chlorophyll d-producing cyanobacterium Acaryochloris marina.</title>
        <authorList>
            <person name="Swingley W.D."/>
            <person name="Chen M."/>
            <person name="Cheung P.C."/>
            <person name="Conrad A.L."/>
            <person name="Dejesa L.C."/>
            <person name="Hao J."/>
            <person name="Honchak B.M."/>
            <person name="Karbach L.E."/>
            <person name="Kurdoglu A."/>
            <person name="Lahiri S."/>
            <person name="Mastrian S.D."/>
            <person name="Miyashita H."/>
            <person name="Page L."/>
            <person name="Ramakrishna P."/>
            <person name="Satoh S."/>
            <person name="Sattley W.M."/>
            <person name="Shimada Y."/>
            <person name="Taylor H.L."/>
            <person name="Tomo T."/>
            <person name="Tsuchiya T."/>
            <person name="Wang Z.T."/>
            <person name="Raymond J."/>
            <person name="Mimuro M."/>
            <person name="Blankenship R.E."/>
            <person name="Touchman J.W."/>
        </authorList>
    </citation>
    <scope>NUCLEOTIDE SEQUENCE [LARGE SCALE GENOMIC DNA]</scope>
    <source>
        <strain>MBIC 11017</strain>
    </source>
</reference>
<organism>
    <name type="scientific">Acaryochloris marina (strain MBIC 11017)</name>
    <dbReference type="NCBI Taxonomy" id="329726"/>
    <lineage>
        <taxon>Bacteria</taxon>
        <taxon>Bacillati</taxon>
        <taxon>Cyanobacteriota</taxon>
        <taxon>Cyanophyceae</taxon>
        <taxon>Acaryochloridales</taxon>
        <taxon>Acaryochloridaceae</taxon>
        <taxon>Acaryochloris</taxon>
    </lineage>
</organism>
<dbReference type="EC" id="2.1.1.182" evidence="1"/>
<dbReference type="EMBL" id="CP000828">
    <property type="protein sequence ID" value="ABW26774.1"/>
    <property type="molecule type" value="Genomic_DNA"/>
</dbReference>
<dbReference type="RefSeq" id="WP_012162289.1">
    <property type="nucleotide sequence ID" value="NC_009925.1"/>
</dbReference>
<dbReference type="SMR" id="B0CC89"/>
<dbReference type="STRING" id="329726.AM1_1753"/>
<dbReference type="KEGG" id="amr:AM1_1753"/>
<dbReference type="eggNOG" id="COG0030">
    <property type="taxonomic scope" value="Bacteria"/>
</dbReference>
<dbReference type="HOGENOM" id="CLU_041220_0_1_3"/>
<dbReference type="OrthoDB" id="9814755at2"/>
<dbReference type="Proteomes" id="UP000000268">
    <property type="component" value="Chromosome"/>
</dbReference>
<dbReference type="GO" id="GO:0005829">
    <property type="term" value="C:cytosol"/>
    <property type="evidence" value="ECO:0007669"/>
    <property type="project" value="TreeGrafter"/>
</dbReference>
<dbReference type="GO" id="GO:0052908">
    <property type="term" value="F:16S rRNA (adenine(1518)-N(6)/adenine(1519)-N(6))-dimethyltransferase activity"/>
    <property type="evidence" value="ECO:0007669"/>
    <property type="project" value="UniProtKB-EC"/>
</dbReference>
<dbReference type="GO" id="GO:0003723">
    <property type="term" value="F:RNA binding"/>
    <property type="evidence" value="ECO:0007669"/>
    <property type="project" value="UniProtKB-KW"/>
</dbReference>
<dbReference type="CDD" id="cd02440">
    <property type="entry name" value="AdoMet_MTases"/>
    <property type="match status" value="1"/>
</dbReference>
<dbReference type="FunFam" id="1.10.8.100:FF:000001">
    <property type="entry name" value="Ribosomal RNA small subunit methyltransferase A"/>
    <property type="match status" value="1"/>
</dbReference>
<dbReference type="FunFam" id="3.40.50.150:FF:000023">
    <property type="entry name" value="Ribosomal RNA small subunit methyltransferase A"/>
    <property type="match status" value="1"/>
</dbReference>
<dbReference type="Gene3D" id="1.10.8.100">
    <property type="entry name" value="Ribosomal RNA adenine dimethylase-like, domain 2"/>
    <property type="match status" value="1"/>
</dbReference>
<dbReference type="Gene3D" id="3.40.50.150">
    <property type="entry name" value="Vaccinia Virus protein VP39"/>
    <property type="match status" value="1"/>
</dbReference>
<dbReference type="HAMAP" id="MF_00607">
    <property type="entry name" value="16SrRNA_methyltr_A"/>
    <property type="match status" value="1"/>
</dbReference>
<dbReference type="InterPro" id="IPR001737">
    <property type="entry name" value="KsgA/Erm"/>
</dbReference>
<dbReference type="InterPro" id="IPR023165">
    <property type="entry name" value="rRNA_Ade_diMease-like_C"/>
</dbReference>
<dbReference type="InterPro" id="IPR020596">
    <property type="entry name" value="rRNA_Ade_Mease_Trfase_CS"/>
</dbReference>
<dbReference type="InterPro" id="IPR020598">
    <property type="entry name" value="rRNA_Ade_methylase_Trfase_N"/>
</dbReference>
<dbReference type="InterPro" id="IPR011530">
    <property type="entry name" value="rRNA_adenine_dimethylase"/>
</dbReference>
<dbReference type="InterPro" id="IPR029063">
    <property type="entry name" value="SAM-dependent_MTases_sf"/>
</dbReference>
<dbReference type="NCBIfam" id="TIGR00755">
    <property type="entry name" value="ksgA"/>
    <property type="match status" value="1"/>
</dbReference>
<dbReference type="PANTHER" id="PTHR11727">
    <property type="entry name" value="DIMETHYLADENOSINE TRANSFERASE"/>
    <property type="match status" value="1"/>
</dbReference>
<dbReference type="PANTHER" id="PTHR11727:SF7">
    <property type="entry name" value="DIMETHYLADENOSINE TRANSFERASE-RELATED"/>
    <property type="match status" value="1"/>
</dbReference>
<dbReference type="Pfam" id="PF00398">
    <property type="entry name" value="RrnaAD"/>
    <property type="match status" value="1"/>
</dbReference>
<dbReference type="SMART" id="SM00650">
    <property type="entry name" value="rADc"/>
    <property type="match status" value="1"/>
</dbReference>
<dbReference type="SUPFAM" id="SSF53335">
    <property type="entry name" value="S-adenosyl-L-methionine-dependent methyltransferases"/>
    <property type="match status" value="1"/>
</dbReference>
<dbReference type="PROSITE" id="PS01131">
    <property type="entry name" value="RRNA_A_DIMETH"/>
    <property type="match status" value="1"/>
</dbReference>
<dbReference type="PROSITE" id="PS51689">
    <property type="entry name" value="SAM_RNA_A_N6_MT"/>
    <property type="match status" value="1"/>
</dbReference>
<proteinExistence type="inferred from homology"/>
<accession>B0CC89</accession>
<comment type="function">
    <text evidence="1">Specifically dimethylates two adjacent adenosines (A1518 and A1519) in the loop of a conserved hairpin near the 3'-end of 16S rRNA in the 30S particle. May play a critical role in biogenesis of 30S subunits.</text>
</comment>
<comment type="catalytic activity">
    <reaction evidence="1">
        <text>adenosine(1518)/adenosine(1519) in 16S rRNA + 4 S-adenosyl-L-methionine = N(6)-dimethyladenosine(1518)/N(6)-dimethyladenosine(1519) in 16S rRNA + 4 S-adenosyl-L-homocysteine + 4 H(+)</text>
        <dbReference type="Rhea" id="RHEA:19609"/>
        <dbReference type="Rhea" id="RHEA-COMP:10232"/>
        <dbReference type="Rhea" id="RHEA-COMP:10233"/>
        <dbReference type="ChEBI" id="CHEBI:15378"/>
        <dbReference type="ChEBI" id="CHEBI:57856"/>
        <dbReference type="ChEBI" id="CHEBI:59789"/>
        <dbReference type="ChEBI" id="CHEBI:74411"/>
        <dbReference type="ChEBI" id="CHEBI:74493"/>
        <dbReference type="EC" id="2.1.1.182"/>
    </reaction>
</comment>
<comment type="subcellular location">
    <subcellularLocation>
        <location evidence="1">Cytoplasm</location>
    </subcellularLocation>
</comment>
<comment type="similarity">
    <text evidence="1">Belongs to the class I-like SAM-binding methyltransferase superfamily. rRNA adenine N(6)-methyltransferase family. RsmA subfamily.</text>
</comment>
<feature type="chain" id="PRO_1000082543" description="Ribosomal RNA small subunit methyltransferase A">
    <location>
        <begin position="1"/>
        <end position="269"/>
    </location>
</feature>
<feature type="binding site" evidence="1">
    <location>
        <position position="11"/>
    </location>
    <ligand>
        <name>S-adenosyl-L-methionine</name>
        <dbReference type="ChEBI" id="CHEBI:59789"/>
    </ligand>
</feature>
<feature type="binding site" evidence="1">
    <location>
        <position position="13"/>
    </location>
    <ligand>
        <name>S-adenosyl-L-methionine</name>
        <dbReference type="ChEBI" id="CHEBI:59789"/>
    </ligand>
</feature>
<feature type="binding site" evidence="1">
    <location>
        <position position="38"/>
    </location>
    <ligand>
        <name>S-adenosyl-L-methionine</name>
        <dbReference type="ChEBI" id="CHEBI:59789"/>
    </ligand>
</feature>
<feature type="binding site" evidence="1">
    <location>
        <position position="59"/>
    </location>
    <ligand>
        <name>S-adenosyl-L-methionine</name>
        <dbReference type="ChEBI" id="CHEBI:59789"/>
    </ligand>
</feature>
<feature type="binding site" evidence="1">
    <location>
        <position position="84"/>
    </location>
    <ligand>
        <name>S-adenosyl-L-methionine</name>
        <dbReference type="ChEBI" id="CHEBI:59789"/>
    </ligand>
</feature>
<feature type="binding site" evidence="1">
    <location>
        <position position="105"/>
    </location>
    <ligand>
        <name>S-adenosyl-L-methionine</name>
        <dbReference type="ChEBI" id="CHEBI:59789"/>
    </ligand>
</feature>
<name>RSMA_ACAM1</name>
<evidence type="ECO:0000255" key="1">
    <source>
        <dbReference type="HAMAP-Rule" id="MF_00607"/>
    </source>
</evidence>
<keyword id="KW-0963">Cytoplasm</keyword>
<keyword id="KW-0489">Methyltransferase</keyword>
<keyword id="KW-1185">Reference proteome</keyword>
<keyword id="KW-0694">RNA-binding</keyword>
<keyword id="KW-0698">rRNA processing</keyword>
<keyword id="KW-0949">S-adenosyl-L-methionine</keyword>
<keyword id="KW-0808">Transferase</keyword>
<protein>
    <recommendedName>
        <fullName evidence="1">Ribosomal RNA small subunit methyltransferase A</fullName>
        <ecNumber evidence="1">2.1.1.182</ecNumber>
    </recommendedName>
    <alternativeName>
        <fullName evidence="1">16S rRNA (adenine(1518)-N(6)/adenine(1519)-N(6))-dimethyltransferase</fullName>
    </alternativeName>
    <alternativeName>
        <fullName evidence="1">16S rRNA dimethyladenosine transferase</fullName>
    </alternativeName>
    <alternativeName>
        <fullName evidence="1">16S rRNA dimethylase</fullName>
    </alternativeName>
    <alternativeName>
        <fullName evidence="1">S-adenosylmethionine-6-N', N'-adenosyl(rRNA) dimethyltransferase</fullName>
    </alternativeName>
</protein>
<sequence>MPRPRKRFAQHWLKSQAVLRQIIAAAKIQGCDRILEIGPGRGVLTRELLAQAQSVVSVELDRDLCKSLRHTFNDQENFTLLELDFLNLDVAAELTEPLPNKVVANIPYNITSPILSKLLGRIDAPAQPVYETVVLLIQKEVADRLVAEPGSKIFNGLSVRSQYLADCELICPVPASAFKPAPKVESAVVRLTPRPYPQPVQNPQWLSTLLKVGFSSRRKMLRNNLKSLVDRDQLSECLNTLNISLQARAEDLSVTQWIALSDSVHPSQV</sequence>
<gene>
    <name evidence="1" type="primary">rsmA</name>
    <name evidence="1" type="synonym">ksgA</name>
    <name type="ordered locus">AM1_1753</name>
</gene>